<sequence length="577" mass="66765">MLHEIILLLAGNTSGLFIEKNGQILLHPSVQPLHPGERELINDIVSLASKRKRIERYIEIFDEDLIQQNQFLLKALRLLLSKKLFLYDESLANLERMIISSDPYFVGSGKFVSLAQLEAHLADWKETLSSLLVLQGNISQCLSVASTFQKLHNMYMGSTHLNFKKLVLECECAFQKTWLDELVQYLVNDSGDDSFKCSFLCGDTKDFVSCSNNVPFLTQDIVNCLVSIRTCMLNAKKCFTDAFCEILRCFYRLVYEMPLPLTKSSVTKLADEMFTLVSEKIIFQLASFHQIFDLVKMLEMVMLLENVEFLPTLSEMFRDVRGEYCSSNDVQGVVIDDILPVVLRKTISLLDLATEYGECVSFLKLVSIFDEEDEMIRSENRKIDVEGLNMQLLLCLKWPFNLFMDKNALNVYSDLWILLGSLHLSITKIKSLFYERKEYTAKGISQPWTQLWVTLWFLSSLQYYAYECVIKPSYCKLRESLTELYRTQKLRMQDCSQLHALTLTYAKKMLFFYDDDLHISLNSIYHELSLFRSQEVSKVDCQLAAHVSHSIECIRQKENDPSYDREIINALIVQLNL</sequence>
<keyword id="KW-0131">Cell cycle</keyword>
<keyword id="KW-0963">Cytoplasm</keyword>
<keyword id="KW-0206">Cytoskeleton</keyword>
<keyword id="KW-0493">Microtubule</keyword>
<keyword id="KW-1185">Reference proteome</keyword>
<proteinExistence type="inferred from homology"/>
<evidence type="ECO:0000269" key="1">
    <source>
    </source>
</evidence>
<evidence type="ECO:0000269" key="2">
    <source>
    </source>
</evidence>
<evidence type="ECO:0000305" key="3"/>
<feature type="chain" id="PRO_0000362147" description="Gamma-tubulin complex component gfh1">
    <location>
        <begin position="1"/>
        <end position="577"/>
    </location>
</feature>
<gene>
    <name type="primary">gfh1</name>
    <name type="ORF">SPBC211.06</name>
</gene>
<comment type="function">
    <text evidence="1">Required for proper anchoring of astral microtubules at the spindle pole bodies (SPBs), during anaphase, ensuring correct cell polarity.</text>
</comment>
<comment type="subcellular location">
    <subcellularLocation>
        <location evidence="1 2">Cytoplasm</location>
        <location evidence="1 2">Cytoskeleton</location>
        <location evidence="1 2">Microtubule organizing center</location>
        <location evidence="1 2">Spindle pole body</location>
    </subcellularLocation>
    <text>Localizes at the microtubule organizing center (MTOC).</text>
</comment>
<comment type="similarity">
    <text evidence="3">Belongs to the TUBGCP family.</text>
</comment>
<reference key="1">
    <citation type="journal article" date="2002" name="Nature">
        <title>The genome sequence of Schizosaccharomyces pombe.</title>
        <authorList>
            <person name="Wood V."/>
            <person name="Gwilliam R."/>
            <person name="Rajandream M.A."/>
            <person name="Lyne M.H."/>
            <person name="Lyne R."/>
            <person name="Stewart A."/>
            <person name="Sgouros J.G."/>
            <person name="Peat N."/>
            <person name="Hayles J."/>
            <person name="Baker S.G."/>
            <person name="Basham D."/>
            <person name="Bowman S."/>
            <person name="Brooks K."/>
            <person name="Brown D."/>
            <person name="Brown S."/>
            <person name="Chillingworth T."/>
            <person name="Churcher C.M."/>
            <person name="Collins M."/>
            <person name="Connor R."/>
            <person name="Cronin A."/>
            <person name="Davis P."/>
            <person name="Feltwell T."/>
            <person name="Fraser A."/>
            <person name="Gentles S."/>
            <person name="Goble A."/>
            <person name="Hamlin N."/>
            <person name="Harris D.E."/>
            <person name="Hidalgo J."/>
            <person name="Hodgson G."/>
            <person name="Holroyd S."/>
            <person name="Hornsby T."/>
            <person name="Howarth S."/>
            <person name="Huckle E.J."/>
            <person name="Hunt S."/>
            <person name="Jagels K."/>
            <person name="James K.D."/>
            <person name="Jones L."/>
            <person name="Jones M."/>
            <person name="Leather S."/>
            <person name="McDonald S."/>
            <person name="McLean J."/>
            <person name="Mooney P."/>
            <person name="Moule S."/>
            <person name="Mungall K.L."/>
            <person name="Murphy L.D."/>
            <person name="Niblett D."/>
            <person name="Odell C."/>
            <person name="Oliver K."/>
            <person name="O'Neil S."/>
            <person name="Pearson D."/>
            <person name="Quail M.A."/>
            <person name="Rabbinowitsch E."/>
            <person name="Rutherford K.M."/>
            <person name="Rutter S."/>
            <person name="Saunders D."/>
            <person name="Seeger K."/>
            <person name="Sharp S."/>
            <person name="Skelton J."/>
            <person name="Simmonds M.N."/>
            <person name="Squares R."/>
            <person name="Squares S."/>
            <person name="Stevens K."/>
            <person name="Taylor K."/>
            <person name="Taylor R.G."/>
            <person name="Tivey A."/>
            <person name="Walsh S.V."/>
            <person name="Warren T."/>
            <person name="Whitehead S."/>
            <person name="Woodward J.R."/>
            <person name="Volckaert G."/>
            <person name="Aert R."/>
            <person name="Robben J."/>
            <person name="Grymonprez B."/>
            <person name="Weltjens I."/>
            <person name="Vanstreels E."/>
            <person name="Rieger M."/>
            <person name="Schaefer M."/>
            <person name="Mueller-Auer S."/>
            <person name="Gabel C."/>
            <person name="Fuchs M."/>
            <person name="Duesterhoeft A."/>
            <person name="Fritzc C."/>
            <person name="Holzer E."/>
            <person name="Moestl D."/>
            <person name="Hilbert H."/>
            <person name="Borzym K."/>
            <person name="Langer I."/>
            <person name="Beck A."/>
            <person name="Lehrach H."/>
            <person name="Reinhardt R."/>
            <person name="Pohl T.M."/>
            <person name="Eger P."/>
            <person name="Zimmermann W."/>
            <person name="Wedler H."/>
            <person name="Wambutt R."/>
            <person name="Purnelle B."/>
            <person name="Goffeau A."/>
            <person name="Cadieu E."/>
            <person name="Dreano S."/>
            <person name="Gloux S."/>
            <person name="Lelaure V."/>
            <person name="Mottier S."/>
            <person name="Galibert F."/>
            <person name="Aves S.J."/>
            <person name="Xiang Z."/>
            <person name="Hunt C."/>
            <person name="Moore K."/>
            <person name="Hurst S.M."/>
            <person name="Lucas M."/>
            <person name="Rochet M."/>
            <person name="Gaillardin C."/>
            <person name="Tallada V.A."/>
            <person name="Garzon A."/>
            <person name="Thode G."/>
            <person name="Daga R.R."/>
            <person name="Cruzado L."/>
            <person name="Jimenez J."/>
            <person name="Sanchez M."/>
            <person name="del Rey F."/>
            <person name="Benito J."/>
            <person name="Dominguez A."/>
            <person name="Revuelta J.L."/>
            <person name="Moreno S."/>
            <person name="Armstrong J."/>
            <person name="Forsburg S.L."/>
            <person name="Cerutti L."/>
            <person name="Lowe T."/>
            <person name="McCombie W.R."/>
            <person name="Paulsen I."/>
            <person name="Potashkin J."/>
            <person name="Shpakovski G.V."/>
            <person name="Ussery D."/>
            <person name="Barrell B.G."/>
            <person name="Nurse P."/>
        </authorList>
    </citation>
    <scope>NUCLEOTIDE SEQUENCE [LARGE SCALE GENOMIC DNA]</scope>
    <source>
        <strain>972 / ATCC 24843</strain>
    </source>
</reference>
<reference key="2">
    <citation type="journal article" date="2006" name="Nat. Biotechnol.">
        <title>ORFeome cloning and global analysis of protein localization in the fission yeast Schizosaccharomyces pombe.</title>
        <authorList>
            <person name="Matsuyama A."/>
            <person name="Arai R."/>
            <person name="Yashiroda Y."/>
            <person name="Shirai A."/>
            <person name="Kamata A."/>
            <person name="Sekido S."/>
            <person name="Kobayashi Y."/>
            <person name="Hashimoto A."/>
            <person name="Hamamoto M."/>
            <person name="Hiraoka Y."/>
            <person name="Horinouchi S."/>
            <person name="Yoshida M."/>
        </authorList>
    </citation>
    <scope>SUBCELLULAR LOCATION [LARGE SCALE ANALYSIS]</scope>
</reference>
<reference key="3">
    <citation type="journal article" date="2004" name="Mol. Biol. Cell">
        <title>Identification and characterization of two novel proteins affecting fission yeast gamma-tubulin complex function.</title>
        <authorList>
            <person name="Venkatram S."/>
            <person name="Tasto J.J."/>
            <person name="Feoktistova A."/>
            <person name="Jennings J.L."/>
            <person name="Link A.J."/>
            <person name="Gould K.L."/>
        </authorList>
    </citation>
    <scope>FUNCTION</scope>
    <scope>SUBCELLULAR LOCATION</scope>
</reference>
<accession>Q9P7R5</accession>
<organism>
    <name type="scientific">Schizosaccharomyces pombe (strain 972 / ATCC 24843)</name>
    <name type="common">Fission yeast</name>
    <dbReference type="NCBI Taxonomy" id="284812"/>
    <lineage>
        <taxon>Eukaryota</taxon>
        <taxon>Fungi</taxon>
        <taxon>Dikarya</taxon>
        <taxon>Ascomycota</taxon>
        <taxon>Taphrinomycotina</taxon>
        <taxon>Schizosaccharomycetes</taxon>
        <taxon>Schizosaccharomycetales</taxon>
        <taxon>Schizosaccharomycetaceae</taxon>
        <taxon>Schizosaccharomyces</taxon>
    </lineage>
</organism>
<protein>
    <recommendedName>
        <fullName>Gamma-tubulin complex component gfh1</fullName>
    </recommendedName>
    <alternativeName>
        <fullName>Gcp4 homolog 1</fullName>
    </alternativeName>
</protein>
<dbReference type="EMBL" id="CU329671">
    <property type="protein sequence ID" value="CAB75414.1"/>
    <property type="molecule type" value="Genomic_DNA"/>
</dbReference>
<dbReference type="PIR" id="T50341">
    <property type="entry name" value="T50341"/>
</dbReference>
<dbReference type="RefSeq" id="NP_596616.1">
    <property type="nucleotide sequence ID" value="NM_001022537.2"/>
</dbReference>
<dbReference type="SMR" id="Q9P7R5"/>
<dbReference type="BioGRID" id="277192">
    <property type="interactions" value="25"/>
</dbReference>
<dbReference type="FunCoup" id="Q9P7R5">
    <property type="interactions" value="6"/>
</dbReference>
<dbReference type="STRING" id="284812.Q9P7R5"/>
<dbReference type="iPTMnet" id="Q9P7R5"/>
<dbReference type="PaxDb" id="4896-SPBC211.06.1"/>
<dbReference type="EnsemblFungi" id="SPBC211.06.1">
    <property type="protein sequence ID" value="SPBC211.06.1:pep"/>
    <property type="gene ID" value="SPBC211.06"/>
</dbReference>
<dbReference type="GeneID" id="2540667"/>
<dbReference type="KEGG" id="spo:2540667"/>
<dbReference type="PomBase" id="SPBC211.06">
    <property type="gene designation" value="gfh1"/>
</dbReference>
<dbReference type="VEuPathDB" id="FungiDB:SPBC211.06"/>
<dbReference type="HOGENOM" id="CLU_482466_0_0_1"/>
<dbReference type="InParanoid" id="Q9P7R5"/>
<dbReference type="OMA" id="YFYDGII"/>
<dbReference type="PRO" id="PR:Q9P7R5"/>
<dbReference type="Proteomes" id="UP000002485">
    <property type="component" value="Chromosome II"/>
</dbReference>
<dbReference type="GO" id="GO:0005829">
    <property type="term" value="C:cytosol"/>
    <property type="evidence" value="ECO:0007005"/>
    <property type="project" value="PomBase"/>
</dbReference>
<dbReference type="GO" id="GO:0000923">
    <property type="term" value="C:equatorial microtubule organizing center"/>
    <property type="evidence" value="ECO:0000314"/>
    <property type="project" value="PomBase"/>
</dbReference>
<dbReference type="GO" id="GO:0000930">
    <property type="term" value="C:gamma-tubulin complex"/>
    <property type="evidence" value="ECO:0000318"/>
    <property type="project" value="GO_Central"/>
</dbReference>
<dbReference type="GO" id="GO:0000931">
    <property type="term" value="C:gamma-tubulin ring complex"/>
    <property type="evidence" value="ECO:0000314"/>
    <property type="project" value="PomBase"/>
</dbReference>
<dbReference type="GO" id="GO:0005874">
    <property type="term" value="C:microtubule"/>
    <property type="evidence" value="ECO:0007669"/>
    <property type="project" value="UniProtKB-KW"/>
</dbReference>
<dbReference type="GO" id="GO:0044732">
    <property type="term" value="C:mitotic spindle pole body"/>
    <property type="evidence" value="ECO:0000314"/>
    <property type="project" value="PomBase"/>
</dbReference>
<dbReference type="GO" id="GO:0005634">
    <property type="term" value="C:nucleus"/>
    <property type="evidence" value="ECO:0007005"/>
    <property type="project" value="PomBase"/>
</dbReference>
<dbReference type="GO" id="GO:0043015">
    <property type="term" value="F:gamma-tubulin binding"/>
    <property type="evidence" value="ECO:0000318"/>
    <property type="project" value="GO_Central"/>
</dbReference>
<dbReference type="GO" id="GO:0030953">
    <property type="term" value="P:astral microtubule organization"/>
    <property type="evidence" value="ECO:0000315"/>
    <property type="project" value="PomBase"/>
</dbReference>
<dbReference type="GO" id="GO:0031122">
    <property type="term" value="P:cytoplasmic microtubule organization"/>
    <property type="evidence" value="ECO:0000318"/>
    <property type="project" value="GO_Central"/>
</dbReference>
<dbReference type="GO" id="GO:0051321">
    <property type="term" value="P:meiotic cell cycle"/>
    <property type="evidence" value="ECO:0000318"/>
    <property type="project" value="GO_Central"/>
</dbReference>
<dbReference type="GO" id="GO:0007020">
    <property type="term" value="P:microtubule nucleation"/>
    <property type="evidence" value="ECO:0000318"/>
    <property type="project" value="GO_Central"/>
</dbReference>
<dbReference type="GO" id="GO:0051415">
    <property type="term" value="P:microtubule nucleation by interphase microtubule organizing center"/>
    <property type="evidence" value="ECO:0000316"/>
    <property type="project" value="PomBase"/>
</dbReference>
<dbReference type="GO" id="GO:0000278">
    <property type="term" value="P:mitotic cell cycle"/>
    <property type="evidence" value="ECO:0000318"/>
    <property type="project" value="GO_Central"/>
</dbReference>
<dbReference type="GO" id="GO:0051225">
    <property type="term" value="P:spindle assembly"/>
    <property type="evidence" value="ECO:0000318"/>
    <property type="project" value="GO_Central"/>
</dbReference>
<dbReference type="Gene3D" id="1.20.120.1900">
    <property type="entry name" value="Gamma-tubulin complex, C-terminal domain"/>
    <property type="match status" value="1"/>
</dbReference>
<dbReference type="InterPro" id="IPR040457">
    <property type="entry name" value="GCP_C"/>
</dbReference>
<dbReference type="InterPro" id="IPR042241">
    <property type="entry name" value="GCP_C_sf"/>
</dbReference>
<dbReference type="Pfam" id="PF04130">
    <property type="entry name" value="GCP_C_terminal"/>
    <property type="match status" value="1"/>
</dbReference>
<name>GFH1_SCHPO</name>